<reference key="1">
    <citation type="journal article" date="2001" name="Nature">
        <title>Complete genome sequence of a multiple drug resistant Salmonella enterica serovar Typhi CT18.</title>
        <authorList>
            <person name="Parkhill J."/>
            <person name="Dougan G."/>
            <person name="James K.D."/>
            <person name="Thomson N.R."/>
            <person name="Pickard D."/>
            <person name="Wain J."/>
            <person name="Churcher C.M."/>
            <person name="Mungall K.L."/>
            <person name="Bentley S.D."/>
            <person name="Holden M.T.G."/>
            <person name="Sebaihia M."/>
            <person name="Baker S."/>
            <person name="Basham D."/>
            <person name="Brooks K."/>
            <person name="Chillingworth T."/>
            <person name="Connerton P."/>
            <person name="Cronin A."/>
            <person name="Davis P."/>
            <person name="Davies R.M."/>
            <person name="Dowd L."/>
            <person name="White N."/>
            <person name="Farrar J."/>
            <person name="Feltwell T."/>
            <person name="Hamlin N."/>
            <person name="Haque A."/>
            <person name="Hien T.T."/>
            <person name="Holroyd S."/>
            <person name="Jagels K."/>
            <person name="Krogh A."/>
            <person name="Larsen T.S."/>
            <person name="Leather S."/>
            <person name="Moule S."/>
            <person name="O'Gaora P."/>
            <person name="Parry C."/>
            <person name="Quail M.A."/>
            <person name="Rutherford K.M."/>
            <person name="Simmonds M."/>
            <person name="Skelton J."/>
            <person name="Stevens K."/>
            <person name="Whitehead S."/>
            <person name="Barrell B.G."/>
        </authorList>
    </citation>
    <scope>NUCLEOTIDE SEQUENCE [LARGE SCALE GENOMIC DNA]</scope>
    <source>
        <strain>CT18</strain>
    </source>
</reference>
<reference key="2">
    <citation type="journal article" date="2003" name="J. Bacteriol.">
        <title>Comparative genomics of Salmonella enterica serovar Typhi strains Ty2 and CT18.</title>
        <authorList>
            <person name="Deng W."/>
            <person name="Liou S.-R."/>
            <person name="Plunkett G. III"/>
            <person name="Mayhew G.F."/>
            <person name="Rose D.J."/>
            <person name="Burland V."/>
            <person name="Kodoyianni V."/>
            <person name="Schwartz D.C."/>
            <person name="Blattner F.R."/>
        </authorList>
    </citation>
    <scope>NUCLEOTIDE SEQUENCE [LARGE SCALE GENOMIC DNA]</scope>
    <source>
        <strain>ATCC 700931 / Ty2</strain>
    </source>
</reference>
<proteinExistence type="inferred from homology"/>
<protein>
    <recommendedName>
        <fullName>Ribonuclease HII</fullName>
        <shortName>RNase HII</shortName>
        <ecNumber>3.1.26.4</ecNumber>
    </recommendedName>
</protein>
<gene>
    <name type="primary">rnhB</name>
    <name type="ordered locus">STY0253</name>
    <name type="ordered locus">t0231</name>
</gene>
<feature type="chain" id="PRO_0000111617" description="Ribonuclease HII">
    <location>
        <begin position="1"/>
        <end position="198"/>
    </location>
</feature>
<feature type="domain" description="RNase H type-2" evidence="2">
    <location>
        <begin position="10"/>
        <end position="198"/>
    </location>
</feature>
<feature type="binding site" evidence="1">
    <location>
        <position position="16"/>
    </location>
    <ligand>
        <name>a divalent metal cation</name>
        <dbReference type="ChEBI" id="CHEBI:60240"/>
    </ligand>
</feature>
<feature type="binding site" evidence="1">
    <location>
        <position position="17"/>
    </location>
    <ligand>
        <name>a divalent metal cation</name>
        <dbReference type="ChEBI" id="CHEBI:60240"/>
    </ligand>
</feature>
<feature type="binding site" evidence="1">
    <location>
        <position position="108"/>
    </location>
    <ligand>
        <name>a divalent metal cation</name>
        <dbReference type="ChEBI" id="CHEBI:60240"/>
    </ligand>
</feature>
<evidence type="ECO:0000250" key="1"/>
<evidence type="ECO:0000255" key="2">
    <source>
        <dbReference type="PROSITE-ProRule" id="PRU01319"/>
    </source>
</evidence>
<evidence type="ECO:0000305" key="3"/>
<organism>
    <name type="scientific">Salmonella typhi</name>
    <dbReference type="NCBI Taxonomy" id="90370"/>
    <lineage>
        <taxon>Bacteria</taxon>
        <taxon>Pseudomonadati</taxon>
        <taxon>Pseudomonadota</taxon>
        <taxon>Gammaproteobacteria</taxon>
        <taxon>Enterobacterales</taxon>
        <taxon>Enterobacteriaceae</taxon>
        <taxon>Salmonella</taxon>
    </lineage>
</organism>
<keyword id="KW-0963">Cytoplasm</keyword>
<keyword id="KW-0255">Endonuclease</keyword>
<keyword id="KW-0378">Hydrolase</keyword>
<keyword id="KW-0464">Manganese</keyword>
<keyword id="KW-0479">Metal-binding</keyword>
<keyword id="KW-0540">Nuclease</keyword>
<name>RNH2_SALTI</name>
<comment type="function">
    <text evidence="1">Endonuclease that specifically degrades the RNA of RNA-DNA hybrids.</text>
</comment>
<comment type="catalytic activity">
    <reaction>
        <text>Endonucleolytic cleavage to 5'-phosphomonoester.</text>
        <dbReference type="EC" id="3.1.26.4"/>
    </reaction>
</comment>
<comment type="cofactor">
    <cofactor evidence="1">
        <name>Mn(2+)</name>
        <dbReference type="ChEBI" id="CHEBI:29035"/>
    </cofactor>
    <cofactor evidence="1">
        <name>Mg(2+)</name>
        <dbReference type="ChEBI" id="CHEBI:18420"/>
    </cofactor>
    <text evidence="1">Manganese or magnesium. Binds 1 divalent metal ion per monomer in the absence of substrate. May bind a second metal ion after substrate binding.</text>
</comment>
<comment type="subcellular location">
    <subcellularLocation>
        <location evidence="3">Cytoplasm</location>
    </subcellularLocation>
</comment>
<comment type="similarity">
    <text evidence="3">Belongs to the RNase HII family.</text>
</comment>
<dbReference type="EC" id="3.1.26.4"/>
<dbReference type="EMBL" id="AL513382">
    <property type="protein sequence ID" value="CAD08688.1"/>
    <property type="molecule type" value="Genomic_DNA"/>
</dbReference>
<dbReference type="EMBL" id="AE014613">
    <property type="protein sequence ID" value="AAO67961.1"/>
    <property type="molecule type" value="Genomic_DNA"/>
</dbReference>
<dbReference type="RefSeq" id="NP_454837.1">
    <property type="nucleotide sequence ID" value="NC_003198.1"/>
</dbReference>
<dbReference type="RefSeq" id="WP_000569412.1">
    <property type="nucleotide sequence ID" value="NZ_WSUR01000009.1"/>
</dbReference>
<dbReference type="SMR" id="P0A2C2"/>
<dbReference type="STRING" id="220341.gene:17584286"/>
<dbReference type="KEGG" id="stt:t0231"/>
<dbReference type="KEGG" id="sty:STY0253"/>
<dbReference type="PATRIC" id="fig|220341.7.peg.253"/>
<dbReference type="eggNOG" id="COG0164">
    <property type="taxonomic scope" value="Bacteria"/>
</dbReference>
<dbReference type="HOGENOM" id="CLU_036532_3_2_6"/>
<dbReference type="OMA" id="YPTKLHL"/>
<dbReference type="OrthoDB" id="9803420at2"/>
<dbReference type="Proteomes" id="UP000000541">
    <property type="component" value="Chromosome"/>
</dbReference>
<dbReference type="Proteomes" id="UP000002670">
    <property type="component" value="Chromosome"/>
</dbReference>
<dbReference type="GO" id="GO:0005737">
    <property type="term" value="C:cytoplasm"/>
    <property type="evidence" value="ECO:0007669"/>
    <property type="project" value="UniProtKB-SubCell"/>
</dbReference>
<dbReference type="GO" id="GO:0032299">
    <property type="term" value="C:ribonuclease H2 complex"/>
    <property type="evidence" value="ECO:0007669"/>
    <property type="project" value="TreeGrafter"/>
</dbReference>
<dbReference type="GO" id="GO:0030145">
    <property type="term" value="F:manganese ion binding"/>
    <property type="evidence" value="ECO:0007669"/>
    <property type="project" value="UniProtKB-UniRule"/>
</dbReference>
<dbReference type="GO" id="GO:0003723">
    <property type="term" value="F:RNA binding"/>
    <property type="evidence" value="ECO:0007669"/>
    <property type="project" value="InterPro"/>
</dbReference>
<dbReference type="GO" id="GO:0004523">
    <property type="term" value="F:RNA-DNA hybrid ribonuclease activity"/>
    <property type="evidence" value="ECO:0007669"/>
    <property type="project" value="UniProtKB-UniRule"/>
</dbReference>
<dbReference type="GO" id="GO:0043137">
    <property type="term" value="P:DNA replication, removal of RNA primer"/>
    <property type="evidence" value="ECO:0007669"/>
    <property type="project" value="TreeGrafter"/>
</dbReference>
<dbReference type="GO" id="GO:0006298">
    <property type="term" value="P:mismatch repair"/>
    <property type="evidence" value="ECO:0007669"/>
    <property type="project" value="TreeGrafter"/>
</dbReference>
<dbReference type="CDD" id="cd07182">
    <property type="entry name" value="RNase_HII_bacteria_HII_like"/>
    <property type="match status" value="1"/>
</dbReference>
<dbReference type="FunFam" id="3.30.420.10:FF:000006">
    <property type="entry name" value="Ribonuclease HII"/>
    <property type="match status" value="1"/>
</dbReference>
<dbReference type="Gene3D" id="3.30.420.10">
    <property type="entry name" value="Ribonuclease H-like superfamily/Ribonuclease H"/>
    <property type="match status" value="1"/>
</dbReference>
<dbReference type="HAMAP" id="MF_00052_B">
    <property type="entry name" value="RNase_HII_B"/>
    <property type="match status" value="1"/>
</dbReference>
<dbReference type="InterPro" id="IPR022898">
    <property type="entry name" value="RNase_HII"/>
</dbReference>
<dbReference type="InterPro" id="IPR001352">
    <property type="entry name" value="RNase_HII/HIII"/>
</dbReference>
<dbReference type="InterPro" id="IPR024567">
    <property type="entry name" value="RNase_HII/HIII_dom"/>
</dbReference>
<dbReference type="InterPro" id="IPR012337">
    <property type="entry name" value="RNaseH-like_sf"/>
</dbReference>
<dbReference type="InterPro" id="IPR036397">
    <property type="entry name" value="RNaseH_sf"/>
</dbReference>
<dbReference type="NCBIfam" id="NF000594">
    <property type="entry name" value="PRK00015.1-1"/>
    <property type="match status" value="1"/>
</dbReference>
<dbReference type="NCBIfam" id="NF000595">
    <property type="entry name" value="PRK00015.1-3"/>
    <property type="match status" value="1"/>
</dbReference>
<dbReference type="NCBIfam" id="NF000596">
    <property type="entry name" value="PRK00015.1-4"/>
    <property type="match status" value="1"/>
</dbReference>
<dbReference type="PANTHER" id="PTHR10954">
    <property type="entry name" value="RIBONUCLEASE H2 SUBUNIT A"/>
    <property type="match status" value="1"/>
</dbReference>
<dbReference type="PANTHER" id="PTHR10954:SF18">
    <property type="entry name" value="RIBONUCLEASE HII"/>
    <property type="match status" value="1"/>
</dbReference>
<dbReference type="Pfam" id="PF01351">
    <property type="entry name" value="RNase_HII"/>
    <property type="match status" value="1"/>
</dbReference>
<dbReference type="SUPFAM" id="SSF53098">
    <property type="entry name" value="Ribonuclease H-like"/>
    <property type="match status" value="1"/>
</dbReference>
<dbReference type="PROSITE" id="PS51975">
    <property type="entry name" value="RNASE_H_2"/>
    <property type="match status" value="1"/>
</dbReference>
<sequence>MIEFVYPHTHLVAGVDEVGRGPLVGAVVTAAVILDPARPIVGLNDSKKLSEKRRLSLYDEIKEKALSWSLGRAEAHEIDELNILHATMLAMQRAVAGLHIAPEYVLIDGNRCPELPVPSMAVVKGDSRVAEISAASILAKVTRDAEMAALDIVFPQYGFAQHKGYPTAFHLEKLAQYGATAHHRRSFAPVKRALGLVS</sequence>
<accession>P0A2C2</accession>
<accession>P40675</accession>